<gene>
    <name evidence="1" type="primary">mtgA</name>
    <name type="ordered locus">SNSL254_A3587</name>
</gene>
<accession>B4T739</accession>
<sequence length="242" mass="27002">MSKRRIAPLTFLRRLLLRILAALAVFWGGGIALFSVVPVPFSAVMAERQISAWLGGEFGYVAHSDWVSMADISPWMGLAVIAAEDQKFPEHWGFDVPAIEKALAHNERNESRIRGASTLSQQTAKNLFLWDGRSWVRKGLEAGLTLGIETVWSKKRILTVYLNIAEFGDGIFGVEAAAQRYFHKPASRLSLSEAALLAAVLPNPIRYKANAPSGYVRSRQAWIMRQMRQLGGESFMTRNQLN</sequence>
<evidence type="ECO:0000255" key="1">
    <source>
        <dbReference type="HAMAP-Rule" id="MF_00766"/>
    </source>
</evidence>
<name>MTGA_SALNS</name>
<dbReference type="EC" id="2.4.99.28" evidence="1"/>
<dbReference type="EMBL" id="CP001113">
    <property type="protein sequence ID" value="ACF63432.1"/>
    <property type="molecule type" value="Genomic_DNA"/>
</dbReference>
<dbReference type="RefSeq" id="WP_000044652.1">
    <property type="nucleotide sequence ID" value="NZ_CCMR01000001.1"/>
</dbReference>
<dbReference type="SMR" id="B4T739"/>
<dbReference type="CAZy" id="GT51">
    <property type="family name" value="Glycosyltransferase Family 51"/>
</dbReference>
<dbReference type="KEGG" id="see:SNSL254_A3587"/>
<dbReference type="HOGENOM" id="CLU_006354_1_1_6"/>
<dbReference type="UniPathway" id="UPA00219"/>
<dbReference type="Proteomes" id="UP000008824">
    <property type="component" value="Chromosome"/>
</dbReference>
<dbReference type="GO" id="GO:0009274">
    <property type="term" value="C:peptidoglycan-based cell wall"/>
    <property type="evidence" value="ECO:0007669"/>
    <property type="project" value="InterPro"/>
</dbReference>
<dbReference type="GO" id="GO:0005886">
    <property type="term" value="C:plasma membrane"/>
    <property type="evidence" value="ECO:0007669"/>
    <property type="project" value="UniProtKB-SubCell"/>
</dbReference>
<dbReference type="GO" id="GO:0016763">
    <property type="term" value="F:pentosyltransferase activity"/>
    <property type="evidence" value="ECO:0007669"/>
    <property type="project" value="InterPro"/>
</dbReference>
<dbReference type="GO" id="GO:0008955">
    <property type="term" value="F:peptidoglycan glycosyltransferase activity"/>
    <property type="evidence" value="ECO:0007669"/>
    <property type="project" value="UniProtKB-UniRule"/>
</dbReference>
<dbReference type="GO" id="GO:0071555">
    <property type="term" value="P:cell wall organization"/>
    <property type="evidence" value="ECO:0007669"/>
    <property type="project" value="UniProtKB-KW"/>
</dbReference>
<dbReference type="GO" id="GO:0009252">
    <property type="term" value="P:peptidoglycan biosynthetic process"/>
    <property type="evidence" value="ECO:0007669"/>
    <property type="project" value="UniProtKB-UniRule"/>
</dbReference>
<dbReference type="GO" id="GO:0008360">
    <property type="term" value="P:regulation of cell shape"/>
    <property type="evidence" value="ECO:0007669"/>
    <property type="project" value="UniProtKB-KW"/>
</dbReference>
<dbReference type="Gene3D" id="1.10.3810.10">
    <property type="entry name" value="Biosynthetic peptidoglycan transglycosylase-like"/>
    <property type="match status" value="1"/>
</dbReference>
<dbReference type="HAMAP" id="MF_00766">
    <property type="entry name" value="PGT_MtgA"/>
    <property type="match status" value="1"/>
</dbReference>
<dbReference type="InterPro" id="IPR001264">
    <property type="entry name" value="Glyco_trans_51"/>
</dbReference>
<dbReference type="InterPro" id="IPR023346">
    <property type="entry name" value="Lysozyme-like_dom_sf"/>
</dbReference>
<dbReference type="InterPro" id="IPR036950">
    <property type="entry name" value="PBP_transglycosylase"/>
</dbReference>
<dbReference type="InterPro" id="IPR011812">
    <property type="entry name" value="Pep_trsgly"/>
</dbReference>
<dbReference type="NCBIfam" id="TIGR02070">
    <property type="entry name" value="mono_pep_trsgly"/>
    <property type="match status" value="1"/>
</dbReference>
<dbReference type="PANTHER" id="PTHR30400:SF0">
    <property type="entry name" value="BIOSYNTHETIC PEPTIDOGLYCAN TRANSGLYCOSYLASE"/>
    <property type="match status" value="1"/>
</dbReference>
<dbReference type="PANTHER" id="PTHR30400">
    <property type="entry name" value="MONOFUNCTIONAL BIOSYNTHETIC PEPTIDOGLYCAN TRANSGLYCOSYLASE"/>
    <property type="match status" value="1"/>
</dbReference>
<dbReference type="Pfam" id="PF00912">
    <property type="entry name" value="Transgly"/>
    <property type="match status" value="1"/>
</dbReference>
<dbReference type="SUPFAM" id="SSF53955">
    <property type="entry name" value="Lysozyme-like"/>
    <property type="match status" value="1"/>
</dbReference>
<reference key="1">
    <citation type="journal article" date="2011" name="J. Bacteriol.">
        <title>Comparative genomics of 28 Salmonella enterica isolates: evidence for CRISPR-mediated adaptive sublineage evolution.</title>
        <authorList>
            <person name="Fricke W.F."/>
            <person name="Mammel M.K."/>
            <person name="McDermott P.F."/>
            <person name="Tartera C."/>
            <person name="White D.G."/>
            <person name="Leclerc J.E."/>
            <person name="Ravel J."/>
            <person name="Cebula T.A."/>
        </authorList>
    </citation>
    <scope>NUCLEOTIDE SEQUENCE [LARGE SCALE GENOMIC DNA]</scope>
    <source>
        <strain>SL254</strain>
    </source>
</reference>
<feature type="chain" id="PRO_1000133609" description="Biosynthetic peptidoglycan transglycosylase">
    <location>
        <begin position="1"/>
        <end position="242"/>
    </location>
</feature>
<feature type="transmembrane region" description="Helical" evidence="1">
    <location>
        <begin position="19"/>
        <end position="39"/>
    </location>
</feature>
<keyword id="KW-0997">Cell inner membrane</keyword>
<keyword id="KW-1003">Cell membrane</keyword>
<keyword id="KW-0133">Cell shape</keyword>
<keyword id="KW-0961">Cell wall biogenesis/degradation</keyword>
<keyword id="KW-0328">Glycosyltransferase</keyword>
<keyword id="KW-0472">Membrane</keyword>
<keyword id="KW-0573">Peptidoglycan synthesis</keyword>
<keyword id="KW-0808">Transferase</keyword>
<keyword id="KW-0812">Transmembrane</keyword>
<keyword id="KW-1133">Transmembrane helix</keyword>
<proteinExistence type="inferred from homology"/>
<protein>
    <recommendedName>
        <fullName evidence="1">Biosynthetic peptidoglycan transglycosylase</fullName>
        <ecNumber evidence="1">2.4.99.28</ecNumber>
    </recommendedName>
    <alternativeName>
        <fullName evidence="1">Glycan polymerase</fullName>
    </alternativeName>
    <alternativeName>
        <fullName evidence="1">Peptidoglycan glycosyltransferase MtgA</fullName>
        <shortName evidence="1">PGT</shortName>
    </alternativeName>
</protein>
<comment type="function">
    <text evidence="1">Peptidoglycan polymerase that catalyzes glycan chain elongation from lipid-linked precursors.</text>
</comment>
<comment type="catalytic activity">
    <reaction evidence="1">
        <text>[GlcNAc-(1-&gt;4)-Mur2Ac(oyl-L-Ala-gamma-D-Glu-L-Lys-D-Ala-D-Ala)](n)-di-trans,octa-cis-undecaprenyl diphosphate + beta-D-GlcNAc-(1-&gt;4)-Mur2Ac(oyl-L-Ala-gamma-D-Glu-L-Lys-D-Ala-D-Ala)-di-trans,octa-cis-undecaprenyl diphosphate = [GlcNAc-(1-&gt;4)-Mur2Ac(oyl-L-Ala-gamma-D-Glu-L-Lys-D-Ala-D-Ala)](n+1)-di-trans,octa-cis-undecaprenyl diphosphate + di-trans,octa-cis-undecaprenyl diphosphate + H(+)</text>
        <dbReference type="Rhea" id="RHEA:23708"/>
        <dbReference type="Rhea" id="RHEA-COMP:9602"/>
        <dbReference type="Rhea" id="RHEA-COMP:9603"/>
        <dbReference type="ChEBI" id="CHEBI:15378"/>
        <dbReference type="ChEBI" id="CHEBI:58405"/>
        <dbReference type="ChEBI" id="CHEBI:60033"/>
        <dbReference type="ChEBI" id="CHEBI:78435"/>
        <dbReference type="EC" id="2.4.99.28"/>
    </reaction>
</comment>
<comment type="pathway">
    <text evidence="1">Cell wall biogenesis; peptidoglycan biosynthesis.</text>
</comment>
<comment type="subcellular location">
    <subcellularLocation>
        <location evidence="1">Cell inner membrane</location>
        <topology evidence="1">Single-pass membrane protein</topology>
    </subcellularLocation>
</comment>
<comment type="similarity">
    <text evidence="1">Belongs to the glycosyltransferase 51 family.</text>
</comment>
<organism>
    <name type="scientific">Salmonella newport (strain SL254)</name>
    <dbReference type="NCBI Taxonomy" id="423368"/>
    <lineage>
        <taxon>Bacteria</taxon>
        <taxon>Pseudomonadati</taxon>
        <taxon>Pseudomonadota</taxon>
        <taxon>Gammaproteobacteria</taxon>
        <taxon>Enterobacterales</taxon>
        <taxon>Enterobacteriaceae</taxon>
        <taxon>Salmonella</taxon>
    </lineage>
</organism>